<accession>P0CU84</accession>
<gene>
    <name evidence="9" type="primary">apmlA</name>
</gene>
<organism>
    <name type="scientific">Arthrinium phaeospermum</name>
    <name type="common">Gymnosporium phaeospermum</name>
    <dbReference type="NCBI Taxonomy" id="112178"/>
    <lineage>
        <taxon>Eukaryota</taxon>
        <taxon>Fungi</taxon>
        <taxon>Dikarya</taxon>
        <taxon>Ascomycota</taxon>
        <taxon>Pezizomycotina</taxon>
        <taxon>Sordariomycetes</taxon>
        <taxon>Xylariomycetidae</taxon>
        <taxon>Amphisphaeriales</taxon>
        <taxon>Apiosporaceae</taxon>
        <taxon>Arthrinium</taxon>
    </lineage>
</organism>
<dbReference type="EC" id="2.3.1.-" evidence="8"/>
<dbReference type="SMR" id="P0CU84"/>
<dbReference type="GO" id="GO:0004312">
    <property type="term" value="F:fatty acid synthase activity"/>
    <property type="evidence" value="ECO:0007669"/>
    <property type="project" value="TreeGrafter"/>
</dbReference>
<dbReference type="GO" id="GO:0016491">
    <property type="term" value="F:oxidoreductase activity"/>
    <property type="evidence" value="ECO:0007669"/>
    <property type="project" value="UniProtKB-KW"/>
</dbReference>
<dbReference type="GO" id="GO:0031177">
    <property type="term" value="F:phosphopantetheine binding"/>
    <property type="evidence" value="ECO:0007669"/>
    <property type="project" value="InterPro"/>
</dbReference>
<dbReference type="GO" id="GO:0006633">
    <property type="term" value="P:fatty acid biosynthetic process"/>
    <property type="evidence" value="ECO:0007669"/>
    <property type="project" value="TreeGrafter"/>
</dbReference>
<dbReference type="GO" id="GO:0044550">
    <property type="term" value="P:secondary metabolite biosynthetic process"/>
    <property type="evidence" value="ECO:0007669"/>
    <property type="project" value="TreeGrafter"/>
</dbReference>
<dbReference type="CDD" id="cd05195">
    <property type="entry name" value="enoyl_red"/>
    <property type="match status" value="1"/>
</dbReference>
<dbReference type="CDD" id="cd00833">
    <property type="entry name" value="PKS"/>
    <property type="match status" value="1"/>
</dbReference>
<dbReference type="FunFam" id="3.40.50.720:FF:000209">
    <property type="entry name" value="Polyketide synthase Pks12"/>
    <property type="match status" value="1"/>
</dbReference>
<dbReference type="Gene3D" id="3.30.70.3290">
    <property type="match status" value="1"/>
</dbReference>
<dbReference type="Gene3D" id="3.40.47.10">
    <property type="match status" value="1"/>
</dbReference>
<dbReference type="Gene3D" id="1.10.1200.10">
    <property type="entry name" value="ACP-like"/>
    <property type="match status" value="1"/>
</dbReference>
<dbReference type="Gene3D" id="3.40.366.10">
    <property type="entry name" value="Malonyl-Coenzyme A Acyl Carrier Protein, domain 2"/>
    <property type="match status" value="1"/>
</dbReference>
<dbReference type="Gene3D" id="3.90.180.10">
    <property type="entry name" value="Medium-chain alcohol dehydrogenases, catalytic domain"/>
    <property type="match status" value="1"/>
</dbReference>
<dbReference type="Gene3D" id="3.40.50.720">
    <property type="entry name" value="NAD(P)-binding Rossmann-like Domain"/>
    <property type="match status" value="2"/>
</dbReference>
<dbReference type="Gene3D" id="3.10.129.110">
    <property type="entry name" value="Polyketide synthase dehydratase"/>
    <property type="match status" value="1"/>
</dbReference>
<dbReference type="InterPro" id="IPR001227">
    <property type="entry name" value="Ac_transferase_dom_sf"/>
</dbReference>
<dbReference type="InterPro" id="IPR036736">
    <property type="entry name" value="ACP-like_sf"/>
</dbReference>
<dbReference type="InterPro" id="IPR014043">
    <property type="entry name" value="Acyl_transferase_dom"/>
</dbReference>
<dbReference type="InterPro" id="IPR016035">
    <property type="entry name" value="Acyl_Trfase/lysoPLipase"/>
</dbReference>
<dbReference type="InterPro" id="IPR013154">
    <property type="entry name" value="ADH-like_N"/>
</dbReference>
<dbReference type="InterPro" id="IPR011032">
    <property type="entry name" value="GroES-like_sf"/>
</dbReference>
<dbReference type="InterPro" id="IPR014031">
    <property type="entry name" value="Ketoacyl_synth_C"/>
</dbReference>
<dbReference type="InterPro" id="IPR014030">
    <property type="entry name" value="Ketoacyl_synth_N"/>
</dbReference>
<dbReference type="InterPro" id="IPR016036">
    <property type="entry name" value="Malonyl_transacylase_ACP-bd"/>
</dbReference>
<dbReference type="InterPro" id="IPR036291">
    <property type="entry name" value="NAD(P)-bd_dom_sf"/>
</dbReference>
<dbReference type="InterPro" id="IPR056501">
    <property type="entry name" value="NAD-bd_HRPKS_sdrA"/>
</dbReference>
<dbReference type="InterPro" id="IPR032821">
    <property type="entry name" value="PKS_assoc"/>
</dbReference>
<dbReference type="InterPro" id="IPR020841">
    <property type="entry name" value="PKS_Beta-ketoAc_synthase_dom"/>
</dbReference>
<dbReference type="InterPro" id="IPR042104">
    <property type="entry name" value="PKS_dehydratase_sf"/>
</dbReference>
<dbReference type="InterPro" id="IPR020807">
    <property type="entry name" value="PKS_DH"/>
</dbReference>
<dbReference type="InterPro" id="IPR049551">
    <property type="entry name" value="PKS_DH_C"/>
</dbReference>
<dbReference type="InterPro" id="IPR049552">
    <property type="entry name" value="PKS_DH_N"/>
</dbReference>
<dbReference type="InterPro" id="IPR020843">
    <property type="entry name" value="PKS_ER"/>
</dbReference>
<dbReference type="InterPro" id="IPR013968">
    <property type="entry name" value="PKS_KR"/>
</dbReference>
<dbReference type="InterPro" id="IPR049900">
    <property type="entry name" value="PKS_mFAS_DH"/>
</dbReference>
<dbReference type="InterPro" id="IPR050091">
    <property type="entry name" value="PKS_NRPS_Biosynth_Enz"/>
</dbReference>
<dbReference type="InterPro" id="IPR020806">
    <property type="entry name" value="PKS_PP-bd"/>
</dbReference>
<dbReference type="InterPro" id="IPR009081">
    <property type="entry name" value="PP-bd_ACP"/>
</dbReference>
<dbReference type="InterPro" id="IPR016039">
    <property type="entry name" value="Thiolase-like"/>
</dbReference>
<dbReference type="PANTHER" id="PTHR43775:SF18">
    <property type="entry name" value="ENZYME, PUTATIVE (JCVI)-RELATED"/>
    <property type="match status" value="1"/>
</dbReference>
<dbReference type="PANTHER" id="PTHR43775">
    <property type="entry name" value="FATTY ACID SYNTHASE"/>
    <property type="match status" value="1"/>
</dbReference>
<dbReference type="Pfam" id="PF00698">
    <property type="entry name" value="Acyl_transf_1"/>
    <property type="match status" value="1"/>
</dbReference>
<dbReference type="Pfam" id="PF08240">
    <property type="entry name" value="ADH_N"/>
    <property type="match status" value="1"/>
</dbReference>
<dbReference type="Pfam" id="PF13602">
    <property type="entry name" value="ADH_zinc_N_2"/>
    <property type="match status" value="1"/>
</dbReference>
<dbReference type="Pfam" id="PF16197">
    <property type="entry name" value="KAsynt_C_assoc"/>
    <property type="match status" value="1"/>
</dbReference>
<dbReference type="Pfam" id="PF00109">
    <property type="entry name" value="ketoacyl-synt"/>
    <property type="match status" value="1"/>
</dbReference>
<dbReference type="Pfam" id="PF02801">
    <property type="entry name" value="Ketoacyl-synt_C"/>
    <property type="match status" value="1"/>
</dbReference>
<dbReference type="Pfam" id="PF08659">
    <property type="entry name" value="KR"/>
    <property type="match status" value="1"/>
</dbReference>
<dbReference type="Pfam" id="PF23114">
    <property type="entry name" value="NAD-bd_HRPKS_sdrA"/>
    <property type="match status" value="1"/>
</dbReference>
<dbReference type="Pfam" id="PF21089">
    <property type="entry name" value="PKS_DH_N"/>
    <property type="match status" value="1"/>
</dbReference>
<dbReference type="Pfam" id="PF00550">
    <property type="entry name" value="PP-binding"/>
    <property type="match status" value="1"/>
</dbReference>
<dbReference type="Pfam" id="PF14765">
    <property type="entry name" value="PS-DH"/>
    <property type="match status" value="1"/>
</dbReference>
<dbReference type="SMART" id="SM00827">
    <property type="entry name" value="PKS_AT"/>
    <property type="match status" value="1"/>
</dbReference>
<dbReference type="SMART" id="SM00826">
    <property type="entry name" value="PKS_DH"/>
    <property type="match status" value="1"/>
</dbReference>
<dbReference type="SMART" id="SM00829">
    <property type="entry name" value="PKS_ER"/>
    <property type="match status" value="1"/>
</dbReference>
<dbReference type="SMART" id="SM00822">
    <property type="entry name" value="PKS_KR"/>
    <property type="match status" value="1"/>
</dbReference>
<dbReference type="SMART" id="SM00825">
    <property type="entry name" value="PKS_KS"/>
    <property type="match status" value="1"/>
</dbReference>
<dbReference type="SMART" id="SM00823">
    <property type="entry name" value="PKS_PP"/>
    <property type="match status" value="1"/>
</dbReference>
<dbReference type="SUPFAM" id="SSF47336">
    <property type="entry name" value="ACP-like"/>
    <property type="match status" value="1"/>
</dbReference>
<dbReference type="SUPFAM" id="SSF52151">
    <property type="entry name" value="FabD/lysophospholipase-like"/>
    <property type="match status" value="1"/>
</dbReference>
<dbReference type="SUPFAM" id="SSF50129">
    <property type="entry name" value="GroES-like"/>
    <property type="match status" value="1"/>
</dbReference>
<dbReference type="SUPFAM" id="SSF51735">
    <property type="entry name" value="NAD(P)-binding Rossmann-fold domains"/>
    <property type="match status" value="2"/>
</dbReference>
<dbReference type="SUPFAM" id="SSF55048">
    <property type="entry name" value="Probable ACP-binding domain of malonyl-CoA ACP transacylase"/>
    <property type="match status" value="1"/>
</dbReference>
<dbReference type="SUPFAM" id="SSF53901">
    <property type="entry name" value="Thiolase-like"/>
    <property type="match status" value="1"/>
</dbReference>
<dbReference type="PROSITE" id="PS50075">
    <property type="entry name" value="CARRIER"/>
    <property type="match status" value="1"/>
</dbReference>
<dbReference type="PROSITE" id="PS52004">
    <property type="entry name" value="KS3_2"/>
    <property type="match status" value="1"/>
</dbReference>
<dbReference type="PROSITE" id="PS52019">
    <property type="entry name" value="PKS_MFAS_DH"/>
    <property type="match status" value="1"/>
</dbReference>
<evidence type="ECO:0000250" key="1">
    <source>
        <dbReference type="UniProtKB" id="Q9Y8A5"/>
    </source>
</evidence>
<evidence type="ECO:0000255" key="2"/>
<evidence type="ECO:0000255" key="3">
    <source>
        <dbReference type="PROSITE-ProRule" id="PRU00258"/>
    </source>
</evidence>
<evidence type="ECO:0000255" key="4">
    <source>
        <dbReference type="PROSITE-ProRule" id="PRU01348"/>
    </source>
</evidence>
<evidence type="ECO:0000255" key="5">
    <source>
        <dbReference type="PROSITE-ProRule" id="PRU01363"/>
    </source>
</evidence>
<evidence type="ECO:0000255" key="6">
    <source>
        <dbReference type="PROSITE-ProRule" id="PRU10022"/>
    </source>
</evidence>
<evidence type="ECO:0000256" key="7">
    <source>
        <dbReference type="SAM" id="MobiDB-lite"/>
    </source>
</evidence>
<evidence type="ECO:0000269" key="8">
    <source>
    </source>
</evidence>
<evidence type="ECO:0000303" key="9">
    <source>
    </source>
</evidence>
<evidence type="ECO:0000305" key="10">
    <source>
    </source>
</evidence>
<protein>
    <recommendedName>
        <fullName evidence="9">Highly reducing polyketide synthase apmlA</fullName>
        <shortName evidence="9">HRPKS apmlA</shortName>
        <ecNumber evidence="8">2.3.1.-</ecNumber>
    </recommendedName>
    <alternativeName>
        <fullName evidence="9">Phaeospelide A biosynthesis cluster protein apmlA</fullName>
    </alternativeName>
</protein>
<keyword id="KW-0012">Acyltransferase</keyword>
<keyword id="KW-0511">Multifunctional enzyme</keyword>
<keyword id="KW-0521">NADP</keyword>
<keyword id="KW-0560">Oxidoreductase</keyword>
<keyword id="KW-0596">Phosphopantetheine</keyword>
<keyword id="KW-0597">Phosphoprotein</keyword>
<keyword id="KW-0808">Transferase</keyword>
<reference key="1">
    <citation type="journal article" date="2019" name="Org. Lett.">
        <title>The discovery of fungal polyene macrolides via a postgenomic approach reveals a polyketide macrocyclization by trans-acting thioesterase in fungi.</title>
        <authorList>
            <person name="Morishita Y."/>
            <person name="Zhang H."/>
            <person name="Taniguchi T."/>
            <person name="Mori K."/>
            <person name="Asai T."/>
        </authorList>
    </citation>
    <scope>NUCLEOTIDE SEQUENCE [GENOMIC DNA]</scope>
    <scope>DOMAIN</scope>
    <scope>FUNCTION</scope>
    <scope>CATALYTIC ACTIVITY</scope>
    <scope>PATHWAY</scope>
</reference>
<comment type="function">
    <text evidence="8">Highly reducing polyketide synthase (HR-PKS); part of the gene cluster that mediates the biosynthesis of phaeospelide A, a fungal polyene macrolide with a 34-membered macrolactone ring and an all-trans conjugated hexaene structure (PubMed:31180682). The HR-PKS ApmlA uses acetyl-CoA and malonyl-CoA as its starter and extender units, respectively, and provides the large carbon framework in phaeospelide via 16 cycles of polyketide chain elongation, which is the largest number identified in fungal iterative PKSs thus far (PubMed:31180682). During round 1, the KR domain reduces beta-ketone to an L-oriented hydroxy group, while during later rounds, it provides hydroxy groups in the D-configuration (PubMed:31180682). The characteristic conjugated hexaene moiety is built during the later rounds (10-15), when the KR and DH domains are at work but ER is off (PubMed:31180682). Phylogenetic analysis of the DH domain suggests that a polyene formation is programmed in the DH domain (PubMed:31180682). Finally, the mature ACP-tethered carbon chain is transferred to the serine residue of the thiohydrolase apmlB, followed by intramolecular macrolactonization, generating phaeospelide A (PubMed:31180682). When one elongation cycle during rounds 7-9 is skipped, phaeospelide B is biosynthesized instead (PubMed:31180682).</text>
</comment>
<comment type="cofactor">
    <cofactor evidence="1">
        <name>pantetheine 4'-phosphate</name>
        <dbReference type="ChEBI" id="CHEBI:47942"/>
    </cofactor>
    <text evidence="1">Binds 1 phosphopantetheine covalently.</text>
</comment>
<comment type="pathway">
    <text evidence="8">Secondary metabolite biosynthesis.</text>
</comment>
<comment type="domain">
    <text evidence="10">Multidomain protein; including a ketosynthase (KS) that catalyzes repeated decarboxylative condensation to elongate the polyketide backbone; a malonyl-CoA:ACP transacylase (MAT) that selects and transfers the extender unit malonyl-CoA; a dehydratase (DH) domain that reduces hydroxyl groups to enoyl groups; an enoylreductase (ER) domain that reduces enoyl groups to alkyl group; a ketoreductase (KR) domain that catalyzes beta-ketoreduction steps; and an acyl-carrier protein (ACP) that serves as the tether of the growing and completed polyketide via its phosphopantetheinyl arm.</text>
</comment>
<proteinExistence type="evidence at protein level"/>
<name>APMLA_ARTPE</name>
<sequence>MSDHNHTNGTTNGNGIGSNGVQSHVPNGAHINGTSSGLKPNGISNGTTNGINGHAPSTAATQTPVAVVGLACRLPGKSNSPEALWKFLLDGGVADPTPPDHRYNFSTHYDGSQRPGTMPSPGGMLLRDVDLTAFDASFFNIGHAEAAVMDPQQRQLLEVTYECLENSGVPLGKLRGTRAGCVVANNAVEYEGFATHDREDNVSGGSTGFSRSILSNRISHYLDIQGPSISIDTACSGTLVGVDLACRYLQTNQADGMLVGGALLYLDPSALQDTGPMKGAFSPTGQCHTFDADADGYIRGEAISCVYLKRLDDAIRDGDPIRAVIRGSATNSDGNTTSLTQPSSAAQAAAIRMAYSNAGISDFNETGYLECHGTGTPTGDPLEVAGLASVFAPTRPAEKPLIIGSIKSNVGHSESAAGLSGLIKTVLTVERGVIPGTPTFIKPTPRIDFDKSRVRPSRRTIRWPQSASGLRRASVNSFGFGGTNAHVVLEARDSMIKDPSVRKGFVFSNHGSSLFGLDADLEAGSERPYILALSANDKDALETNIQTLSTHLGDPAVGVKLSDVAYTLSERRTHHFHRGFVIADSLEISSDSMILGKKKAQPPRVAFIFTGQGAQWSQMGRDLIESFPLAKATIQKLDAALQTLPNPPQWSLVDELCEAREGAVLRLPEFSQPLVTALQIAQLTVLSHWGISATRVLGHSSGEIAAAVAAGLVRPEEAIKIAYLRGLAAKFHQPDQPLGMLAVGVSAEAVAPYLETEPTVQIACFNSPTSLTLSGQQPDLVRVCDRLKADGHFARMLQVNLAYHSEHIRSIAEEYHSLLKEQVPGAAGSSGNKKVTMFSSVTGKPISEAYDALGPDYWRQNMVSPVRFAQAASNMLSGPESSEFLIEIGPAGALAGPVAQVIKAAPSARNTQYVAAAKRGADTLLALYETAGKLWANSGVVDLAKVNGYDGQANLVVDLPNYQWNHSRRYWRESLSASEFLQRPFLSHDLLGSKILSVPWHNPTFYQVIELSDVPWLRDHKIGDQVIFPAAGYLSMAVEAIHQTTVMTQWREKGVPKSFAYCLKDVRFLRSLVLEEDVRAKISLALIPLHASPRRWYNFRVRSLMEGVWVDHCDGLVRIDEEAFDTTAPSRALEPLAHPEPGAVGYKSANAGEFSFGPAFQRIEYFDWIWGSPETRAQVTTEYPVSAYSKQSEYPVHPVAMDCLLQLTGYSIAQMQMNALDDINCVPVGIEGIVIPSRSNPPAKSCMVRSVAHLLDSSTSQTYGSRFASAGLYDPEDRSLVMEIKRIRFDPISSRGDQSEHVYMHFGWNADVSLTDAEGLNSYLAAAAGSPEEKDLVAVATPEEQKNDESRSSPFALVQRLLDALAHRRPEMAVLEANLDSDDSTCLWLDLPSKSNNSGPRSGYSKFHCVSKDPKALSHLQETHNEAPRTTWDLVDMAHPSGRIDSTDKFDLILVKSSDPETTFTTPALLSNIVASVSEGGMVILLNTQGKPTVFHDASQALEASGLCRTKDLSASVGGLAIVATARRVGPAATTASGDKVITCFRLTDDDGPSNVLAGLKDAGWAVNTCSDADALAHRSNILVVDELFTTVASRVTAEQWKMLQTIIRKECNVLWVTKGGQMEVTEPDRAAAPGLLRTIRSEELGIRLISLDVENPTGPRTLYAIEECLRLLQESHAGIQKDSEFVERGGVIFTPRLLADPALNAAKHEPVNGRKPQMESLQDKKTPVCLGVERVGTIDSLHYAERSPTPLPIKDGYIEIEIHAAGVNFKDLALTLGIVNSNDPFTLGGEAAGVVSRIGKGVPGDRFVAGQRVVAMFPGSFGNRIQVPWQVAHAIPDRLSFEEAATLPVAFLTAMHGLFDLGNLQAGQRVLIHSATGGTGSAAVQLCQHMGAEIFATAGTEEKRRFLQDIYNIPADHIFSSRTTDFEHQIMRLTGGLGVDVILNSLTGDLLEASWNIIAHGGTMVEIGKKDIMEHSRLSMEPFSRSASFRALDLSLDTADLYGKGAGLGQTVGRLFERLFSLLERGHVRPITPMQTFAFGQVTDALALMRSTKHMGKLVLSRGPDSNDQVAIRPAQRLVRFRPDATYLLVGGLKGICGSLAVDFAKKGAKHLAALSRSNYDDPQSQIVLRQLKDLDCQIDLLRGDITKVEDVRRVFAETTVPVAGIIQGAMVLRDRPFANMTVEEYHAAAACKIQGTWNLHNCAQEAQAPLDFFTILSSISSVLGNPAQGNYASGCSFQDAFSSYRQELGLPASTVNLGIIEQIGYMARNEDLLEKNVSSEVAKGINERLLCKIIGYSILQQSGSPVSEDPYSRARMVTGLTMPQPPDSMLRLDARFAALFVRDGSSSNTQAGGSGAASQDVSQEIKELNLLLRSKSARAANLPQVVDATLAVVSGYLVRAMRLSEAIEPERSLSAYGIDSLAAVEFRNWLRLELGAAMSVIDITTAPSLLFLAEKIITKVDGVE</sequence>
<feature type="chain" id="PRO_0000447823" description="Highly reducing polyketide synthase apmlA">
    <location>
        <begin position="1"/>
        <end position="2466"/>
    </location>
</feature>
<feature type="domain" description="Ketosynthase family 3 (KS3)" evidence="4 10">
    <location>
        <begin position="62"/>
        <end position="491"/>
    </location>
</feature>
<feature type="domain" description="PKS/mFAS DH" evidence="5">
    <location>
        <begin position="988"/>
        <end position="1298"/>
    </location>
</feature>
<feature type="domain" description="Carrier" evidence="3 10">
    <location>
        <begin position="2382"/>
        <end position="2462"/>
    </location>
</feature>
<feature type="region of interest" description="Disordered" evidence="7">
    <location>
        <begin position="1"/>
        <end position="57"/>
    </location>
</feature>
<feature type="region of interest" description="Malonyl-CoA:ACP transacylase (MAT) domain" evidence="2 10">
    <location>
        <begin position="608"/>
        <end position="921"/>
    </location>
</feature>
<feature type="region of interest" description="Dehydratase (DH) domain" evidence="2 10">
    <location>
        <begin position="988"/>
        <end position="1297"/>
    </location>
</feature>
<feature type="region of interest" description="N-terminal hotdog fold" evidence="5">
    <location>
        <begin position="988"/>
        <end position="1124"/>
    </location>
</feature>
<feature type="region of interest" description="C-terminal hotdog fold" evidence="5">
    <location>
        <begin position="1137"/>
        <end position="1298"/>
    </location>
</feature>
<feature type="region of interest" description="Enoyl reductase (ER) domain" evidence="2 10">
    <location>
        <begin position="1737"/>
        <end position="2061"/>
    </location>
</feature>
<feature type="region of interest" description="Ketoreductase (KR) domain" evidence="2 10">
    <location>
        <begin position="2087"/>
        <end position="2264"/>
    </location>
</feature>
<feature type="compositionally biased region" description="Low complexity" evidence="7">
    <location>
        <begin position="41"/>
        <end position="53"/>
    </location>
</feature>
<feature type="active site" description="For beta-ketoacyl synthase activity" evidence="4">
    <location>
        <position position="235"/>
    </location>
</feature>
<feature type="active site" description="For beta-ketoacyl synthase activity" evidence="4">
    <location>
        <position position="372"/>
    </location>
</feature>
<feature type="active site" description="For beta-ketoacyl synthase activity" evidence="4">
    <location>
        <position position="412"/>
    </location>
</feature>
<feature type="active site" description="For malonyltransferase activity" evidence="6">
    <location>
        <position position="700"/>
    </location>
</feature>
<feature type="active site" description="Proton acceptor; for dehydratase activity" evidence="5">
    <location>
        <position position="1020"/>
    </location>
</feature>
<feature type="active site" description="Proton donor; for dehydratase activity" evidence="5">
    <location>
        <position position="1202"/>
    </location>
</feature>
<feature type="modified residue" description="O-(pantetheine 4'-phosphoryl)serine" evidence="3">
    <location>
        <position position="2422"/>
    </location>
</feature>